<comment type="function">
    <text evidence="8 10">Endo-1,4-beta-xylanase involved in the hydrolysis of xylan, a major structural heterogeneous polysaccharide found in plant biomass representing the second most abundant polysaccharide in the biosphere, after cellulose. Plays an important role in causing fusarium head blight (FHB) on cereal crops.</text>
</comment>
<comment type="catalytic activity">
    <reaction evidence="8 10">
        <text>Endohydrolysis of (1-&gt;4)-beta-D-xylosidic linkages in xylans.</text>
        <dbReference type="EC" id="3.2.1.8"/>
    </reaction>
</comment>
<comment type="activity regulation">
    <text evidence="10">Inhibited by the wheat xylanase inhibiting protein I (XIP-I).</text>
</comment>
<comment type="biophysicochemical properties">
    <phDependence>
        <text evidence="8 10">Optimum pH is 6.0.</text>
    </phDependence>
    <temperatureDependence>
        <text evidence="8 10">Optimum temperature is 50 degrees Celsius.</text>
    </temperatureDependence>
</comment>
<comment type="pathway">
    <text>Glycan degradation; xylan degradation.</text>
</comment>
<comment type="subcellular location">
    <subcellularLocation>
        <location evidence="1">Secreted</location>
    </subcellularLocation>
</comment>
<comment type="induction">
    <text evidence="6 7 9">Expression is under the control of transcription factor XYR1 and highly induced by xylan, carboxymethylcellulose (CMC), and hop cell wall.</text>
</comment>
<comment type="similarity">
    <text evidence="11">Belongs to the glycosyl hydrolase 10 (cellulase F) family.</text>
</comment>
<keyword id="KW-0119">Carbohydrate metabolism</keyword>
<keyword id="KW-1015">Disulfide bond</keyword>
<keyword id="KW-0326">Glycosidase</keyword>
<keyword id="KW-0378">Hydrolase</keyword>
<keyword id="KW-0624">Polysaccharide degradation</keyword>
<keyword id="KW-1185">Reference proteome</keyword>
<keyword id="KW-0964">Secreted</keyword>
<keyword id="KW-0732">Signal</keyword>
<keyword id="KW-0843">Virulence</keyword>
<keyword id="KW-0858">Xylan degradation</keyword>
<protein>
    <recommendedName>
        <fullName>Endo-1,4-beta-xylanase D</fullName>
        <shortName>Xylanase D</shortName>
        <ecNumber>3.2.1.8</ecNumber>
    </recommendedName>
    <alternativeName>
        <fullName>1,4-beta-D-xylan xylanohydrolase D</fullName>
    </alternativeName>
</protein>
<sequence>MHFLGLVVAFAPAALAQSAIWGQCGGTGWSGSTTCQSGLKCEKINDFYYQCIPGSDNGGGTTPDPGTPSPGNGNADATGLDAKIRAKGKIYFGTEIDHYHLSNNPLINIVKKDFGQVTNENSMKWDAIEPSRGQFTFSNADKVVDFAQANGKKIRGHTLLWYSQLPQWVKNIRDRATMTSVIENHVKTVVTRYKGKILHWDVVNEIFAEDGNMRNSEFYQVLGEDFVGIAFRAARAADPAAKLYINDYNLDIANYAKVTRGMVDHVNKWVSQGIPIDGIGSQAHLAKPGGWNPASGFPAALKVLAGANVKEVAITELDIDGAAANDYVTVVNSCLTTPKCVGITVWGVSDKDSWRSESNPLLFDRNYQPKAAYTAVSNALN</sequence>
<evidence type="ECO:0000250" key="1"/>
<evidence type="ECO:0000255" key="2"/>
<evidence type="ECO:0000255" key="3">
    <source>
        <dbReference type="PROSITE-ProRule" id="PRU00597"/>
    </source>
</evidence>
<evidence type="ECO:0000255" key="4">
    <source>
        <dbReference type="PROSITE-ProRule" id="PRU01096"/>
    </source>
</evidence>
<evidence type="ECO:0000256" key="5">
    <source>
        <dbReference type="SAM" id="MobiDB-lite"/>
    </source>
</evidence>
<evidence type="ECO:0000269" key="6">
    <source>
    </source>
</evidence>
<evidence type="ECO:0000269" key="7">
    <source>
    </source>
</evidence>
<evidence type="ECO:0000269" key="8">
    <source>
    </source>
</evidence>
<evidence type="ECO:0000269" key="9">
    <source>
    </source>
</evidence>
<evidence type="ECO:0000269" key="10">
    <source ref="7"/>
</evidence>
<evidence type="ECO:0000305" key="11"/>
<gene>
    <name type="primary">XYLD</name>
    <name type="ORF">FGRRES_11304</name>
    <name type="ORF">FGSG_11304</name>
</gene>
<proteinExistence type="evidence at protein level"/>
<organism>
    <name type="scientific">Gibberella zeae (strain ATCC MYA-4620 / CBS 123657 / FGSC 9075 / NRRL 31084 / PH-1)</name>
    <name type="common">Wheat head blight fungus</name>
    <name type="synonym">Fusarium graminearum</name>
    <dbReference type="NCBI Taxonomy" id="229533"/>
    <lineage>
        <taxon>Eukaryota</taxon>
        <taxon>Fungi</taxon>
        <taxon>Dikarya</taxon>
        <taxon>Ascomycota</taxon>
        <taxon>Pezizomycotina</taxon>
        <taxon>Sordariomycetes</taxon>
        <taxon>Hypocreomycetidae</taxon>
        <taxon>Hypocreales</taxon>
        <taxon>Nectriaceae</taxon>
        <taxon>Fusarium</taxon>
    </lineage>
</organism>
<name>XYND_GIBZE</name>
<dbReference type="EC" id="3.2.1.8"/>
<dbReference type="EMBL" id="AY575964">
    <property type="status" value="NOT_ANNOTATED_CDS"/>
    <property type="molecule type" value="Genomic_DNA"/>
</dbReference>
<dbReference type="EMBL" id="DS231671">
    <property type="protein sequence ID" value="ESU18318.1"/>
    <property type="molecule type" value="Genomic_DNA"/>
</dbReference>
<dbReference type="EMBL" id="HG970334">
    <property type="protein sequence ID" value="CEF86546.1"/>
    <property type="molecule type" value="Genomic_DNA"/>
</dbReference>
<dbReference type="RefSeq" id="XP_011325940.1">
    <property type="nucleotide sequence ID" value="XM_011327638.1"/>
</dbReference>
<dbReference type="SMR" id="I1S3C6"/>
<dbReference type="STRING" id="229533.I1S3C6"/>
<dbReference type="GeneID" id="23558155"/>
<dbReference type="KEGG" id="fgr:FGSG_11304"/>
<dbReference type="VEuPathDB" id="FungiDB:FGRAMPH1_01G21737"/>
<dbReference type="eggNOG" id="ENOG502QSCW">
    <property type="taxonomic scope" value="Eukaryota"/>
</dbReference>
<dbReference type="HOGENOM" id="CLU_020161_2_1_1"/>
<dbReference type="InParanoid" id="I1S3C6"/>
<dbReference type="OrthoDB" id="66194at110618"/>
<dbReference type="UniPathway" id="UPA00114"/>
<dbReference type="PHI-base" id="PHI:4246"/>
<dbReference type="Proteomes" id="UP000070720">
    <property type="component" value="Chromosome 3"/>
</dbReference>
<dbReference type="GO" id="GO:0005576">
    <property type="term" value="C:extracellular region"/>
    <property type="evidence" value="ECO:0007669"/>
    <property type="project" value="UniProtKB-SubCell"/>
</dbReference>
<dbReference type="GO" id="GO:0030248">
    <property type="term" value="F:cellulose binding"/>
    <property type="evidence" value="ECO:0007669"/>
    <property type="project" value="InterPro"/>
</dbReference>
<dbReference type="GO" id="GO:0031176">
    <property type="term" value="F:endo-1,4-beta-xylanase activity"/>
    <property type="evidence" value="ECO:0007669"/>
    <property type="project" value="UniProtKB-EC"/>
</dbReference>
<dbReference type="GO" id="GO:0045493">
    <property type="term" value="P:xylan catabolic process"/>
    <property type="evidence" value="ECO:0007669"/>
    <property type="project" value="UniProtKB-UniPathway"/>
</dbReference>
<dbReference type="Gene3D" id="3.20.20.80">
    <property type="entry name" value="Glycosidases"/>
    <property type="match status" value="1"/>
</dbReference>
<dbReference type="InterPro" id="IPR035971">
    <property type="entry name" value="CBD_sf"/>
</dbReference>
<dbReference type="InterPro" id="IPR000254">
    <property type="entry name" value="Cellulose-bd_dom_fun"/>
</dbReference>
<dbReference type="InterPro" id="IPR044846">
    <property type="entry name" value="GH10"/>
</dbReference>
<dbReference type="InterPro" id="IPR001000">
    <property type="entry name" value="GH10_dom"/>
</dbReference>
<dbReference type="InterPro" id="IPR017853">
    <property type="entry name" value="Glycoside_hydrolase_SF"/>
</dbReference>
<dbReference type="PANTHER" id="PTHR31490:SF76">
    <property type="entry name" value="ENDO-1,4-BETA-XYLANASE C"/>
    <property type="match status" value="1"/>
</dbReference>
<dbReference type="PANTHER" id="PTHR31490">
    <property type="entry name" value="GLYCOSYL HYDROLASE"/>
    <property type="match status" value="1"/>
</dbReference>
<dbReference type="Pfam" id="PF00734">
    <property type="entry name" value="CBM_1"/>
    <property type="match status" value="1"/>
</dbReference>
<dbReference type="Pfam" id="PF00331">
    <property type="entry name" value="Glyco_hydro_10"/>
    <property type="match status" value="1"/>
</dbReference>
<dbReference type="PRINTS" id="PR00134">
    <property type="entry name" value="GLHYDRLASE10"/>
</dbReference>
<dbReference type="SMART" id="SM00236">
    <property type="entry name" value="fCBD"/>
    <property type="match status" value="1"/>
</dbReference>
<dbReference type="SMART" id="SM00633">
    <property type="entry name" value="Glyco_10"/>
    <property type="match status" value="1"/>
</dbReference>
<dbReference type="SUPFAM" id="SSF51445">
    <property type="entry name" value="(Trans)glycosidases"/>
    <property type="match status" value="1"/>
</dbReference>
<dbReference type="SUPFAM" id="SSF57180">
    <property type="entry name" value="Cellulose-binding domain"/>
    <property type="match status" value="1"/>
</dbReference>
<dbReference type="PROSITE" id="PS00562">
    <property type="entry name" value="CBM1_1"/>
    <property type="match status" value="1"/>
</dbReference>
<dbReference type="PROSITE" id="PS51164">
    <property type="entry name" value="CBM1_2"/>
    <property type="match status" value="1"/>
</dbReference>
<dbReference type="PROSITE" id="PS51760">
    <property type="entry name" value="GH10_2"/>
    <property type="match status" value="1"/>
</dbReference>
<feature type="signal peptide" evidence="2">
    <location>
        <begin position="1"/>
        <end position="18"/>
    </location>
</feature>
<feature type="chain" id="PRO_0000429612" description="Endo-1,4-beta-xylanase D">
    <location>
        <begin position="19"/>
        <end position="381"/>
    </location>
</feature>
<feature type="domain" description="CBM1" evidence="3">
    <location>
        <begin position="19"/>
        <end position="52"/>
    </location>
</feature>
<feature type="domain" description="GH10" evidence="4">
    <location>
        <begin position="74"/>
        <end position="379"/>
    </location>
</feature>
<feature type="region of interest" description="Disordered" evidence="5">
    <location>
        <begin position="58"/>
        <end position="78"/>
    </location>
</feature>
<feature type="active site" description="Proton donor" evidence="1">
    <location>
        <position position="205"/>
    </location>
</feature>
<feature type="active site" description="Nucleophile" evidence="1">
    <location>
        <position position="316"/>
    </location>
</feature>
<feature type="disulfide bond" evidence="1">
    <location>
        <begin position="334"/>
        <end position="340"/>
    </location>
</feature>
<reference key="1">
    <citation type="journal article" date="2007" name="Science">
        <title>The Fusarium graminearum genome reveals a link between localized polymorphism and pathogen specialization.</title>
        <authorList>
            <person name="Cuomo C.A."/>
            <person name="Gueldener U."/>
            <person name="Xu J.-R."/>
            <person name="Trail F."/>
            <person name="Turgeon B.G."/>
            <person name="Di Pietro A."/>
            <person name="Walton J.D."/>
            <person name="Ma L.-J."/>
            <person name="Baker S.E."/>
            <person name="Rep M."/>
            <person name="Adam G."/>
            <person name="Antoniw J."/>
            <person name="Baldwin T."/>
            <person name="Calvo S.E."/>
            <person name="Chang Y.-L."/>
            <person name="DeCaprio D."/>
            <person name="Gale L.R."/>
            <person name="Gnerre S."/>
            <person name="Goswami R.S."/>
            <person name="Hammond-Kosack K."/>
            <person name="Harris L.J."/>
            <person name="Hilburn K."/>
            <person name="Kennell J.C."/>
            <person name="Kroken S."/>
            <person name="Magnuson J.K."/>
            <person name="Mannhaupt G."/>
            <person name="Mauceli E.W."/>
            <person name="Mewes H.-W."/>
            <person name="Mitterbauer R."/>
            <person name="Muehlbauer G."/>
            <person name="Muensterkoetter M."/>
            <person name="Nelson D."/>
            <person name="O'Donnell K."/>
            <person name="Ouellet T."/>
            <person name="Qi W."/>
            <person name="Quesneville H."/>
            <person name="Roncero M.I.G."/>
            <person name="Seong K.-Y."/>
            <person name="Tetko I.V."/>
            <person name="Urban M."/>
            <person name="Waalwijk C."/>
            <person name="Ward T.J."/>
            <person name="Yao J."/>
            <person name="Birren B.W."/>
            <person name="Kistler H.C."/>
        </authorList>
    </citation>
    <scope>NUCLEOTIDE SEQUENCE [LARGE SCALE GENOMIC DNA]</scope>
    <source>
        <strain>ATCC MYA-4620 / CBS 123657 / FGSC 9075 / NRRL 31084 / PH-1</strain>
    </source>
</reference>
<reference key="2">
    <citation type="journal article" date="2010" name="Nature">
        <title>Comparative genomics reveals mobile pathogenicity chromosomes in Fusarium.</title>
        <authorList>
            <person name="Ma L.-J."/>
            <person name="van der Does H.C."/>
            <person name="Borkovich K.A."/>
            <person name="Coleman J.J."/>
            <person name="Daboussi M.-J."/>
            <person name="Di Pietro A."/>
            <person name="Dufresne M."/>
            <person name="Freitag M."/>
            <person name="Grabherr M."/>
            <person name="Henrissat B."/>
            <person name="Houterman P.M."/>
            <person name="Kang S."/>
            <person name="Shim W.-B."/>
            <person name="Woloshuk C."/>
            <person name="Xie X."/>
            <person name="Xu J.-R."/>
            <person name="Antoniw J."/>
            <person name="Baker S.E."/>
            <person name="Bluhm B.H."/>
            <person name="Breakspear A."/>
            <person name="Brown D.W."/>
            <person name="Butchko R.A.E."/>
            <person name="Chapman S."/>
            <person name="Coulson R."/>
            <person name="Coutinho P.M."/>
            <person name="Danchin E.G.J."/>
            <person name="Diener A."/>
            <person name="Gale L.R."/>
            <person name="Gardiner D.M."/>
            <person name="Goff S."/>
            <person name="Hammond-Kosack K.E."/>
            <person name="Hilburn K."/>
            <person name="Hua-Van A."/>
            <person name="Jonkers W."/>
            <person name="Kazan K."/>
            <person name="Kodira C.D."/>
            <person name="Koehrsen M."/>
            <person name="Kumar L."/>
            <person name="Lee Y.-H."/>
            <person name="Li L."/>
            <person name="Manners J.M."/>
            <person name="Miranda-Saavedra D."/>
            <person name="Mukherjee M."/>
            <person name="Park G."/>
            <person name="Park J."/>
            <person name="Park S.-Y."/>
            <person name="Proctor R.H."/>
            <person name="Regev A."/>
            <person name="Ruiz-Roldan M.C."/>
            <person name="Sain D."/>
            <person name="Sakthikumar S."/>
            <person name="Sykes S."/>
            <person name="Schwartz D.C."/>
            <person name="Turgeon B.G."/>
            <person name="Wapinski I."/>
            <person name="Yoder O."/>
            <person name="Young S."/>
            <person name="Zeng Q."/>
            <person name="Zhou S."/>
            <person name="Galagan J."/>
            <person name="Cuomo C.A."/>
            <person name="Kistler H.C."/>
            <person name="Rep M."/>
        </authorList>
    </citation>
    <scope>GENOME REANNOTATION</scope>
    <source>
        <strain>ATCC MYA-4620 / CBS 123657 / FGSC 9075 / NRRL 31084 / PH-1</strain>
    </source>
</reference>
<reference key="3">
    <citation type="journal article" date="2015" name="BMC Genomics">
        <title>The completed genome sequence of the pathogenic ascomycete fungus Fusarium graminearum.</title>
        <authorList>
            <person name="King R."/>
            <person name="Urban M."/>
            <person name="Hammond-Kosack M.C.U."/>
            <person name="Hassani-Pak K."/>
            <person name="Hammond-Kosack K.E."/>
        </authorList>
    </citation>
    <scope>NUCLEOTIDE SEQUENCE [LARGE SCALE GENOMIC DNA]</scope>
    <source>
        <strain>ATCC MYA-4620 / CBS 123657 / FGSC 9075 / NRRL 31084 / PH-1</strain>
    </source>
</reference>
<reference key="4">
    <citation type="journal article" date="2006" name="Biochem. Biophys. Res. Commun.">
        <title>Fusarium graminearum on plant cell wall: no fewer than 30 xylanase genes transcribed.</title>
        <authorList>
            <person name="Hatsch D."/>
            <person name="Phalip V."/>
            <person name="Petkovski E."/>
            <person name="Jeltsch J.M."/>
        </authorList>
    </citation>
    <scope>INDUCTION</scope>
</reference>
<reference key="5">
    <citation type="journal article" date="2007" name="Curr. Genet.">
        <title>Xyr1 regulates xylanase but not cellulase formation in the head blight fungus Fusarium graminearum.</title>
        <authorList>
            <person name="Brunner K."/>
            <person name="Lichtenauer A.M."/>
            <person name="Kratochwill K."/>
            <person name="Delic M."/>
            <person name="Mach R.L."/>
        </authorList>
    </citation>
    <scope>INDUCTION</scope>
</reference>
<reference key="6">
    <citation type="journal article" date="2009" name="Bioresour. Technol.">
        <title>Efficient hydrolysis of hemicellulose by a Fusarium graminearum xylanase blend produced at high levels in Escherichia coli.</title>
        <authorList>
            <person name="Carapito R."/>
            <person name="Carapito C."/>
            <person name="Jeltsch J.M."/>
            <person name="Phalip V."/>
        </authorList>
    </citation>
    <scope>FUNCTION</scope>
    <scope>CATALYTIC ACTIVITY</scope>
    <scope>BIOPHYSICOCHEMICAL PROPERTIES</scope>
</reference>
<reference key="7">
    <citation type="journal article" date="2009" name="Enzyme Microb. Technol.">
        <title>Fusarium graminearum xylanases show different functional stabilities, substrate specificities and inhibition sensitivities.</title>
        <authorList>
            <person name="Pollet A."/>
            <person name="Belien T."/>
            <person name="Fierens K."/>
            <person name="Delcour J.A."/>
            <person name="Courtin C.M."/>
        </authorList>
    </citation>
    <scope>FUNCTION</scope>
    <scope>CATALYTIC ACTIVITY</scope>
    <scope>BIOPHYSICOCHEMICAL PROPERTIES</scope>
    <scope>ACTIVITY REGULATION</scope>
</reference>
<reference key="8">
    <citation type="journal article" date="2013" name="Plant Physiol. Biochem.">
        <title>A Fusarium graminearum xylanase expressed during wheat infection is a necrotizing factor but is not essential for virulence.</title>
        <authorList>
            <person name="Sella L."/>
            <person name="Gazzetti K."/>
            <person name="Faoro F."/>
            <person name="Odorizzi S."/>
            <person name="D'Ovidio R."/>
            <person name="Schafer W."/>
            <person name="Favaron F."/>
        </authorList>
    </citation>
    <scope>INDUCTION</scope>
</reference>
<accession>I1S3C6</accession>
<accession>A0A0E0SJD3</accession>